<evidence type="ECO:0000255" key="1">
    <source>
        <dbReference type="HAMAP-Rule" id="MF_01261"/>
    </source>
</evidence>
<sequence>MKTYLVGGAVRDKYLQLPTQDRDWVVVGAAPQTLLAQGYQQVGKDFPVFLHPRSKEEYALARTERKAGQGYTGFSTYFAPDVTLEQDLLRRDLTINAMAEDDEGQLIDPYGGLQDLQQRQLRHVSEAFVEDPLRVLRVARFAARFAPLGFEVAAPTLALMQQMSQQGELAHLTPERVWLETEKALSGPVPQVYFQVLRDCGALAVLFPEIDRLFGVPAPAQWHPEIDTGIHTLLTLAMASHLSDDVAVRFAALTHDVGKGLTNPNFWPHHHGHGPAGVRLVREMCQRLRTPNPVRDLALLVAEYHDLIHTVERLRPATLLKLLDTIDVWRRPQRLQQMILCSEADARGRTGLEDQPYPQAGYLRAAYHQAAQVAVCNVITDGFQGAAIREELQTRRLQALKSWKAAQEAALNAE</sequence>
<dbReference type="EC" id="2.7.7.72" evidence="1"/>
<dbReference type="EC" id="3.1.3.-" evidence="1"/>
<dbReference type="EC" id="3.1.4.-" evidence="1"/>
<dbReference type="EMBL" id="CP001600">
    <property type="protein sequence ID" value="ACR67764.1"/>
    <property type="molecule type" value="Genomic_DNA"/>
</dbReference>
<dbReference type="RefSeq" id="WP_015869964.1">
    <property type="nucleotide sequence ID" value="NZ_CP169062.1"/>
</dbReference>
<dbReference type="SMR" id="C5BHG5"/>
<dbReference type="STRING" id="67780.B6E78_13385"/>
<dbReference type="KEGG" id="eic:NT01EI_0531"/>
<dbReference type="PATRIC" id="fig|634503.3.peg.481"/>
<dbReference type="HOGENOM" id="CLU_015961_1_1_6"/>
<dbReference type="OrthoDB" id="9805698at2"/>
<dbReference type="Proteomes" id="UP000001485">
    <property type="component" value="Chromosome"/>
</dbReference>
<dbReference type="GO" id="GO:0005524">
    <property type="term" value="F:ATP binding"/>
    <property type="evidence" value="ECO:0007669"/>
    <property type="project" value="UniProtKB-UniRule"/>
</dbReference>
<dbReference type="GO" id="GO:0004810">
    <property type="term" value="F:CCA tRNA nucleotidyltransferase activity"/>
    <property type="evidence" value="ECO:0007669"/>
    <property type="project" value="UniProtKB-UniRule"/>
</dbReference>
<dbReference type="GO" id="GO:0004112">
    <property type="term" value="F:cyclic-nucleotide phosphodiesterase activity"/>
    <property type="evidence" value="ECO:0007669"/>
    <property type="project" value="UniProtKB-UniRule"/>
</dbReference>
<dbReference type="GO" id="GO:0000287">
    <property type="term" value="F:magnesium ion binding"/>
    <property type="evidence" value="ECO:0007669"/>
    <property type="project" value="UniProtKB-UniRule"/>
</dbReference>
<dbReference type="GO" id="GO:0016791">
    <property type="term" value="F:phosphatase activity"/>
    <property type="evidence" value="ECO:0007669"/>
    <property type="project" value="UniProtKB-UniRule"/>
</dbReference>
<dbReference type="GO" id="GO:0000049">
    <property type="term" value="F:tRNA binding"/>
    <property type="evidence" value="ECO:0007669"/>
    <property type="project" value="UniProtKB-UniRule"/>
</dbReference>
<dbReference type="GO" id="GO:0042245">
    <property type="term" value="P:RNA repair"/>
    <property type="evidence" value="ECO:0007669"/>
    <property type="project" value="UniProtKB-KW"/>
</dbReference>
<dbReference type="GO" id="GO:0001680">
    <property type="term" value="P:tRNA 3'-terminal CCA addition"/>
    <property type="evidence" value="ECO:0007669"/>
    <property type="project" value="UniProtKB-UniRule"/>
</dbReference>
<dbReference type="CDD" id="cd00077">
    <property type="entry name" value="HDc"/>
    <property type="match status" value="1"/>
</dbReference>
<dbReference type="CDD" id="cd05398">
    <property type="entry name" value="NT_ClassII-CCAase"/>
    <property type="match status" value="1"/>
</dbReference>
<dbReference type="FunFam" id="1.10.3090.10:FF:000001">
    <property type="entry name" value="Multifunctional CCA protein"/>
    <property type="match status" value="1"/>
</dbReference>
<dbReference type="Gene3D" id="3.30.460.10">
    <property type="entry name" value="Beta Polymerase, domain 2"/>
    <property type="match status" value="1"/>
</dbReference>
<dbReference type="Gene3D" id="1.10.3090.10">
    <property type="entry name" value="cca-adding enzyme, domain 2"/>
    <property type="match status" value="1"/>
</dbReference>
<dbReference type="HAMAP" id="MF_01261">
    <property type="entry name" value="CCA_bact_type1"/>
    <property type="match status" value="1"/>
</dbReference>
<dbReference type="HAMAP" id="MF_01262">
    <property type="entry name" value="CCA_bact_type2"/>
    <property type="match status" value="1"/>
</dbReference>
<dbReference type="InterPro" id="IPR012006">
    <property type="entry name" value="CCA_bact"/>
</dbReference>
<dbReference type="InterPro" id="IPR003607">
    <property type="entry name" value="HD/PDEase_dom"/>
</dbReference>
<dbReference type="InterPro" id="IPR006674">
    <property type="entry name" value="HD_domain"/>
</dbReference>
<dbReference type="InterPro" id="IPR043519">
    <property type="entry name" value="NT_sf"/>
</dbReference>
<dbReference type="InterPro" id="IPR002646">
    <property type="entry name" value="PolA_pol_head_dom"/>
</dbReference>
<dbReference type="InterPro" id="IPR032828">
    <property type="entry name" value="PolyA_RNA-bd"/>
</dbReference>
<dbReference type="InterPro" id="IPR050124">
    <property type="entry name" value="tRNA_CCA-adding_enzyme"/>
</dbReference>
<dbReference type="NCBIfam" id="NF008137">
    <property type="entry name" value="PRK10885.1"/>
    <property type="match status" value="1"/>
</dbReference>
<dbReference type="PANTHER" id="PTHR47545">
    <property type="entry name" value="MULTIFUNCTIONAL CCA PROTEIN"/>
    <property type="match status" value="1"/>
</dbReference>
<dbReference type="PANTHER" id="PTHR47545:SF1">
    <property type="entry name" value="MULTIFUNCTIONAL CCA PROTEIN"/>
    <property type="match status" value="1"/>
</dbReference>
<dbReference type="Pfam" id="PF01966">
    <property type="entry name" value="HD"/>
    <property type="match status" value="1"/>
</dbReference>
<dbReference type="Pfam" id="PF01743">
    <property type="entry name" value="PolyA_pol"/>
    <property type="match status" value="1"/>
</dbReference>
<dbReference type="Pfam" id="PF12627">
    <property type="entry name" value="PolyA_pol_RNAbd"/>
    <property type="match status" value="1"/>
</dbReference>
<dbReference type="PIRSF" id="PIRSF000813">
    <property type="entry name" value="CCA_bact"/>
    <property type="match status" value="1"/>
</dbReference>
<dbReference type="SUPFAM" id="SSF81301">
    <property type="entry name" value="Nucleotidyltransferase"/>
    <property type="match status" value="1"/>
</dbReference>
<dbReference type="SUPFAM" id="SSF81891">
    <property type="entry name" value="Poly A polymerase C-terminal region-like"/>
    <property type="match status" value="1"/>
</dbReference>
<dbReference type="PROSITE" id="PS51831">
    <property type="entry name" value="HD"/>
    <property type="match status" value="1"/>
</dbReference>
<gene>
    <name evidence="1" type="primary">cca</name>
    <name type="ordered locus">NT01EI_0531</name>
</gene>
<keyword id="KW-0067">ATP-binding</keyword>
<keyword id="KW-0378">Hydrolase</keyword>
<keyword id="KW-0460">Magnesium</keyword>
<keyword id="KW-0479">Metal-binding</keyword>
<keyword id="KW-0511">Multifunctional enzyme</keyword>
<keyword id="KW-0533">Nickel</keyword>
<keyword id="KW-0547">Nucleotide-binding</keyword>
<keyword id="KW-0548">Nucleotidyltransferase</keyword>
<keyword id="KW-0692">RNA repair</keyword>
<keyword id="KW-0694">RNA-binding</keyword>
<keyword id="KW-0808">Transferase</keyword>
<keyword id="KW-0819">tRNA processing</keyword>
<accession>C5BHG5</accession>
<reference key="1">
    <citation type="submission" date="2009-03" db="EMBL/GenBank/DDBJ databases">
        <title>Complete genome sequence of Edwardsiella ictaluri 93-146.</title>
        <authorList>
            <person name="Williams M.L."/>
            <person name="Gillaspy A.F."/>
            <person name="Dyer D.W."/>
            <person name="Thune R.L."/>
            <person name="Waldbieser G.C."/>
            <person name="Schuster S.C."/>
            <person name="Gipson J."/>
            <person name="Zaitshik J."/>
            <person name="Landry C."/>
            <person name="Lawrence M.L."/>
        </authorList>
    </citation>
    <scope>NUCLEOTIDE SEQUENCE [LARGE SCALE GENOMIC DNA]</scope>
    <source>
        <strain>93-146</strain>
    </source>
</reference>
<proteinExistence type="inferred from homology"/>
<comment type="function">
    <text evidence="1">Catalyzes the addition and repair of the essential 3'-terminal CCA sequence in tRNAs without using a nucleic acid template. Adds these three nucleotides in the order of C, C, and A to the tRNA nucleotide-73, using CTP and ATP as substrates and producing inorganic pyrophosphate. tRNA 3'-terminal CCA addition is required both for tRNA processing and repair. Also involved in tRNA surveillance by mediating tandem CCA addition to generate a CCACCA at the 3' terminus of unstable tRNAs. While stable tRNAs receive only 3'-terminal CCA, unstable tRNAs are marked with CCACCA and rapidly degraded.</text>
</comment>
<comment type="catalytic activity">
    <reaction evidence="1">
        <text>a tRNA precursor + 2 CTP + ATP = a tRNA with a 3' CCA end + 3 diphosphate</text>
        <dbReference type="Rhea" id="RHEA:14433"/>
        <dbReference type="Rhea" id="RHEA-COMP:10465"/>
        <dbReference type="Rhea" id="RHEA-COMP:10468"/>
        <dbReference type="ChEBI" id="CHEBI:30616"/>
        <dbReference type="ChEBI" id="CHEBI:33019"/>
        <dbReference type="ChEBI" id="CHEBI:37563"/>
        <dbReference type="ChEBI" id="CHEBI:74896"/>
        <dbReference type="ChEBI" id="CHEBI:83071"/>
        <dbReference type="EC" id="2.7.7.72"/>
    </reaction>
</comment>
<comment type="catalytic activity">
    <reaction evidence="1">
        <text>a tRNA with a 3' CCA end + 2 CTP + ATP = a tRNA with a 3' CCACCA end + 3 diphosphate</text>
        <dbReference type="Rhea" id="RHEA:76235"/>
        <dbReference type="Rhea" id="RHEA-COMP:10468"/>
        <dbReference type="Rhea" id="RHEA-COMP:18655"/>
        <dbReference type="ChEBI" id="CHEBI:30616"/>
        <dbReference type="ChEBI" id="CHEBI:33019"/>
        <dbReference type="ChEBI" id="CHEBI:37563"/>
        <dbReference type="ChEBI" id="CHEBI:83071"/>
        <dbReference type="ChEBI" id="CHEBI:195187"/>
    </reaction>
    <physiologicalReaction direction="left-to-right" evidence="1">
        <dbReference type="Rhea" id="RHEA:76236"/>
    </physiologicalReaction>
</comment>
<comment type="cofactor">
    <cofactor evidence="1">
        <name>Mg(2+)</name>
        <dbReference type="ChEBI" id="CHEBI:18420"/>
    </cofactor>
    <text evidence="1">Magnesium is required for nucleotidyltransferase activity.</text>
</comment>
<comment type="cofactor">
    <cofactor evidence="1">
        <name>Ni(2+)</name>
        <dbReference type="ChEBI" id="CHEBI:49786"/>
    </cofactor>
    <text evidence="1">Nickel for phosphatase activity.</text>
</comment>
<comment type="subunit">
    <text evidence="1">Monomer. Can also form homodimers and oligomers.</text>
</comment>
<comment type="domain">
    <text evidence="1">Comprises two domains: an N-terminal domain containing the nucleotidyltransferase activity and a C-terminal HD domain associated with both phosphodiesterase and phosphatase activities.</text>
</comment>
<comment type="miscellaneous">
    <text evidence="1">A single active site specifically recognizes both ATP and CTP and is responsible for their addition.</text>
</comment>
<comment type="similarity">
    <text evidence="1">Belongs to the tRNA nucleotidyltransferase/poly(A) polymerase family. Bacterial CCA-adding enzyme type 1 subfamily.</text>
</comment>
<feature type="chain" id="PRO_1000214131" description="Multifunctional CCA protein">
    <location>
        <begin position="1"/>
        <end position="414"/>
    </location>
</feature>
<feature type="domain" description="HD" evidence="1">
    <location>
        <begin position="228"/>
        <end position="329"/>
    </location>
</feature>
<feature type="binding site" evidence="1">
    <location>
        <position position="8"/>
    </location>
    <ligand>
        <name>ATP</name>
        <dbReference type="ChEBI" id="CHEBI:30616"/>
    </ligand>
</feature>
<feature type="binding site" evidence="1">
    <location>
        <position position="8"/>
    </location>
    <ligand>
        <name>CTP</name>
        <dbReference type="ChEBI" id="CHEBI:37563"/>
    </ligand>
</feature>
<feature type="binding site" evidence="1">
    <location>
        <position position="11"/>
    </location>
    <ligand>
        <name>ATP</name>
        <dbReference type="ChEBI" id="CHEBI:30616"/>
    </ligand>
</feature>
<feature type="binding site" evidence="1">
    <location>
        <position position="11"/>
    </location>
    <ligand>
        <name>CTP</name>
        <dbReference type="ChEBI" id="CHEBI:37563"/>
    </ligand>
</feature>
<feature type="binding site" evidence="1">
    <location>
        <position position="21"/>
    </location>
    <ligand>
        <name>Mg(2+)</name>
        <dbReference type="ChEBI" id="CHEBI:18420"/>
    </ligand>
</feature>
<feature type="binding site" evidence="1">
    <location>
        <position position="23"/>
    </location>
    <ligand>
        <name>Mg(2+)</name>
        <dbReference type="ChEBI" id="CHEBI:18420"/>
    </ligand>
</feature>
<feature type="binding site" evidence="1">
    <location>
        <position position="91"/>
    </location>
    <ligand>
        <name>ATP</name>
        <dbReference type="ChEBI" id="CHEBI:30616"/>
    </ligand>
</feature>
<feature type="binding site" evidence="1">
    <location>
        <position position="91"/>
    </location>
    <ligand>
        <name>CTP</name>
        <dbReference type="ChEBI" id="CHEBI:37563"/>
    </ligand>
</feature>
<feature type="binding site" evidence="1">
    <location>
        <position position="137"/>
    </location>
    <ligand>
        <name>ATP</name>
        <dbReference type="ChEBI" id="CHEBI:30616"/>
    </ligand>
</feature>
<feature type="binding site" evidence="1">
    <location>
        <position position="137"/>
    </location>
    <ligand>
        <name>CTP</name>
        <dbReference type="ChEBI" id="CHEBI:37563"/>
    </ligand>
</feature>
<feature type="binding site" evidence="1">
    <location>
        <position position="140"/>
    </location>
    <ligand>
        <name>ATP</name>
        <dbReference type="ChEBI" id="CHEBI:30616"/>
    </ligand>
</feature>
<feature type="binding site" evidence="1">
    <location>
        <position position="140"/>
    </location>
    <ligand>
        <name>CTP</name>
        <dbReference type="ChEBI" id="CHEBI:37563"/>
    </ligand>
</feature>
<protein>
    <recommendedName>
        <fullName evidence="1">Multifunctional CCA protein</fullName>
    </recommendedName>
    <domain>
        <recommendedName>
            <fullName evidence="1">CCA-adding enzyme</fullName>
            <ecNumber evidence="1">2.7.7.72</ecNumber>
        </recommendedName>
        <alternativeName>
            <fullName evidence="1">CCA tRNA nucleotidyltransferase</fullName>
        </alternativeName>
        <alternativeName>
            <fullName evidence="1">tRNA CCA-pyrophosphorylase</fullName>
        </alternativeName>
        <alternativeName>
            <fullName evidence="1">tRNA adenylyl-/cytidylyl-transferase</fullName>
        </alternativeName>
        <alternativeName>
            <fullName evidence="1">tRNA nucleotidyltransferase</fullName>
        </alternativeName>
        <alternativeName>
            <fullName evidence="1">tRNA-NT</fullName>
        </alternativeName>
    </domain>
    <domain>
        <recommendedName>
            <fullName evidence="1">2'-nucleotidase</fullName>
            <ecNumber evidence="1">3.1.3.-</ecNumber>
        </recommendedName>
    </domain>
    <domain>
        <recommendedName>
            <fullName evidence="1">2',3'-cyclic phosphodiesterase</fullName>
            <ecNumber evidence="1">3.1.4.-</ecNumber>
        </recommendedName>
    </domain>
    <domain>
        <recommendedName>
            <fullName evidence="1">Phosphatase</fullName>
            <ecNumber evidence="1">3.1.3.-</ecNumber>
        </recommendedName>
    </domain>
</protein>
<organism>
    <name type="scientific">Edwardsiella ictaluri (strain 93-146)</name>
    <dbReference type="NCBI Taxonomy" id="634503"/>
    <lineage>
        <taxon>Bacteria</taxon>
        <taxon>Pseudomonadati</taxon>
        <taxon>Pseudomonadota</taxon>
        <taxon>Gammaproteobacteria</taxon>
        <taxon>Enterobacterales</taxon>
        <taxon>Hafniaceae</taxon>
        <taxon>Edwardsiella</taxon>
    </lineage>
</organism>
<name>CCA_EDWI9</name>